<proteinExistence type="evidence at protein level"/>
<feature type="chain" id="PRO_0000278244" description="PACRG-like protein">
    <location>
        <begin position="1"/>
        <end position="248"/>
    </location>
</feature>
<feature type="region of interest" description="Disordered" evidence="2">
    <location>
        <begin position="1"/>
        <end position="72"/>
    </location>
</feature>
<feature type="compositionally biased region" description="Polar residues" evidence="2">
    <location>
        <begin position="14"/>
        <end position="29"/>
    </location>
</feature>
<feature type="compositionally biased region" description="Polar residues" evidence="2">
    <location>
        <begin position="36"/>
        <end position="45"/>
    </location>
</feature>
<feature type="modified residue" description="N-acetylmethionine" evidence="1">
    <location>
        <position position="1"/>
    </location>
</feature>
<feature type="modified residue" description="Phosphoserine" evidence="3">
    <location>
        <position position="47"/>
    </location>
</feature>
<sequence length="248" mass="27290">MQRSECSGGVQLRNRATGSNDQRTSSSTQMKHRTTVQRSKSSSLTSSPEAARRARPRPSDKLNPKTINPFGEQPRAPTAFAAIYSQGGIPCRLVHGSVKHRLQWECPPEILPFDPLLITLAEGLRETKHPYTFVSKEGFRELLLVKGAPEKAIPLLPRLIPVLKAALVHSDDEVFERGLSALVQLSVVVGPSLNGHLKLLLTSLSKRLMDKKFKEPITSALQKLEQHGGNASLIIIKSKIPTYCSICC</sequence>
<gene>
    <name type="primary">Pacrgl</name>
</gene>
<dbReference type="EMBL" id="AK016966">
    <property type="protein sequence ID" value="BAB30527.1"/>
    <property type="molecule type" value="mRNA"/>
</dbReference>
<dbReference type="EMBL" id="AK032498">
    <property type="protein sequence ID" value="BAC27898.1"/>
    <property type="molecule type" value="mRNA"/>
</dbReference>
<dbReference type="EMBL" id="BC018481">
    <property type="protein sequence ID" value="AAH18481.1"/>
    <property type="molecule type" value="mRNA"/>
</dbReference>
<dbReference type="CCDS" id="CCDS19281.1"/>
<dbReference type="RefSeq" id="NP_080031.1">
    <property type="nucleotide sequence ID" value="NM_025755.4"/>
</dbReference>
<dbReference type="SMR" id="Q9D3X5"/>
<dbReference type="FunCoup" id="Q9D3X5">
    <property type="interactions" value="80"/>
</dbReference>
<dbReference type="STRING" id="10090.ENSMUSP00000143072"/>
<dbReference type="iPTMnet" id="Q9D3X5"/>
<dbReference type="PhosphoSitePlus" id="Q9D3X5"/>
<dbReference type="PaxDb" id="10090-ENSMUSP00000030968"/>
<dbReference type="PeptideAtlas" id="Q9D3X5"/>
<dbReference type="ProteomicsDB" id="294100"/>
<dbReference type="Pumba" id="Q9D3X5"/>
<dbReference type="Antibodypedia" id="43692">
    <property type="antibodies" value="50 antibodies from 12 providers"/>
</dbReference>
<dbReference type="DNASU" id="66768"/>
<dbReference type="Ensembl" id="ENSMUST00000030968.7">
    <property type="protein sequence ID" value="ENSMUSP00000030968.3"/>
    <property type="gene ID" value="ENSMUSG00000029089.9"/>
</dbReference>
<dbReference type="Ensembl" id="ENSMUST00000196950.5">
    <property type="protein sequence ID" value="ENSMUSP00000143072.2"/>
    <property type="gene ID" value="ENSMUSG00000029089.9"/>
</dbReference>
<dbReference type="GeneID" id="66768"/>
<dbReference type="KEGG" id="mmu:66768"/>
<dbReference type="UCSC" id="uc008xjs.1">
    <property type="organism name" value="mouse"/>
</dbReference>
<dbReference type="AGR" id="MGI:1914018"/>
<dbReference type="CTD" id="133015"/>
<dbReference type="MGI" id="MGI:1914018">
    <property type="gene designation" value="Pacrgl"/>
</dbReference>
<dbReference type="VEuPathDB" id="HostDB:ENSMUSG00000029089"/>
<dbReference type="eggNOG" id="KOG3961">
    <property type="taxonomic scope" value="Eukaryota"/>
</dbReference>
<dbReference type="GeneTree" id="ENSGT00940000159756"/>
<dbReference type="InParanoid" id="Q9D3X5"/>
<dbReference type="OMA" id="HKLQWEC"/>
<dbReference type="OrthoDB" id="10258089at2759"/>
<dbReference type="PhylomeDB" id="Q9D3X5"/>
<dbReference type="TreeFam" id="TF321123"/>
<dbReference type="BioGRID-ORCS" id="66768">
    <property type="hits" value="4 hits in 77 CRISPR screens"/>
</dbReference>
<dbReference type="ChiTaRS" id="Pacrgl">
    <property type="organism name" value="mouse"/>
</dbReference>
<dbReference type="PRO" id="PR:Q9D3X5"/>
<dbReference type="Proteomes" id="UP000000589">
    <property type="component" value="Chromosome 5"/>
</dbReference>
<dbReference type="RNAct" id="Q9D3X5">
    <property type="molecule type" value="protein"/>
</dbReference>
<dbReference type="Bgee" id="ENSMUSG00000029089">
    <property type="expression patterns" value="Expressed in animal zygote and 222 other cell types or tissues"/>
</dbReference>
<dbReference type="ExpressionAtlas" id="Q9D3X5">
    <property type="expression patterns" value="baseline and differential"/>
</dbReference>
<dbReference type="Gene3D" id="1.25.10.10">
    <property type="entry name" value="Leucine-rich Repeat Variant"/>
    <property type="match status" value="1"/>
</dbReference>
<dbReference type="InterPro" id="IPR011989">
    <property type="entry name" value="ARM-like"/>
</dbReference>
<dbReference type="InterPro" id="IPR016024">
    <property type="entry name" value="ARM-type_fold"/>
</dbReference>
<dbReference type="InterPro" id="IPR019399">
    <property type="entry name" value="Parkin_co-regulated_protein"/>
</dbReference>
<dbReference type="PANTHER" id="PTHR21207:SF1">
    <property type="entry name" value="PACRG-LIKE PROTEIN"/>
    <property type="match status" value="1"/>
</dbReference>
<dbReference type="PANTHER" id="PTHR21207">
    <property type="entry name" value="PARKIN COREGULATED GENE PROTEIN PARK2 COREGULATED"/>
    <property type="match status" value="1"/>
</dbReference>
<dbReference type="Pfam" id="PF10274">
    <property type="entry name" value="ParcG"/>
    <property type="match status" value="1"/>
</dbReference>
<dbReference type="SUPFAM" id="SSF48371">
    <property type="entry name" value="ARM repeat"/>
    <property type="match status" value="1"/>
</dbReference>
<keyword id="KW-0007">Acetylation</keyword>
<keyword id="KW-0597">Phosphoprotein</keyword>
<keyword id="KW-1185">Reference proteome</keyword>
<name>PACRL_MOUSE</name>
<protein>
    <recommendedName>
        <fullName>PACRG-like protein</fullName>
    </recommendedName>
</protein>
<organism>
    <name type="scientific">Mus musculus</name>
    <name type="common">Mouse</name>
    <dbReference type="NCBI Taxonomy" id="10090"/>
    <lineage>
        <taxon>Eukaryota</taxon>
        <taxon>Metazoa</taxon>
        <taxon>Chordata</taxon>
        <taxon>Craniata</taxon>
        <taxon>Vertebrata</taxon>
        <taxon>Euteleostomi</taxon>
        <taxon>Mammalia</taxon>
        <taxon>Eutheria</taxon>
        <taxon>Euarchontoglires</taxon>
        <taxon>Glires</taxon>
        <taxon>Rodentia</taxon>
        <taxon>Myomorpha</taxon>
        <taxon>Muroidea</taxon>
        <taxon>Muridae</taxon>
        <taxon>Murinae</taxon>
        <taxon>Mus</taxon>
        <taxon>Mus</taxon>
    </lineage>
</organism>
<evidence type="ECO:0000250" key="1">
    <source>
        <dbReference type="UniProtKB" id="Q8N7B6"/>
    </source>
</evidence>
<evidence type="ECO:0000256" key="2">
    <source>
        <dbReference type="SAM" id="MobiDB-lite"/>
    </source>
</evidence>
<evidence type="ECO:0007744" key="3">
    <source>
    </source>
</evidence>
<accession>Q9D3X5</accession>
<reference key="1">
    <citation type="journal article" date="2005" name="Science">
        <title>The transcriptional landscape of the mammalian genome.</title>
        <authorList>
            <person name="Carninci P."/>
            <person name="Kasukawa T."/>
            <person name="Katayama S."/>
            <person name="Gough J."/>
            <person name="Frith M.C."/>
            <person name="Maeda N."/>
            <person name="Oyama R."/>
            <person name="Ravasi T."/>
            <person name="Lenhard B."/>
            <person name="Wells C."/>
            <person name="Kodzius R."/>
            <person name="Shimokawa K."/>
            <person name="Bajic V.B."/>
            <person name="Brenner S.E."/>
            <person name="Batalov S."/>
            <person name="Forrest A.R."/>
            <person name="Zavolan M."/>
            <person name="Davis M.J."/>
            <person name="Wilming L.G."/>
            <person name="Aidinis V."/>
            <person name="Allen J.E."/>
            <person name="Ambesi-Impiombato A."/>
            <person name="Apweiler R."/>
            <person name="Aturaliya R.N."/>
            <person name="Bailey T.L."/>
            <person name="Bansal M."/>
            <person name="Baxter L."/>
            <person name="Beisel K.W."/>
            <person name="Bersano T."/>
            <person name="Bono H."/>
            <person name="Chalk A.M."/>
            <person name="Chiu K.P."/>
            <person name="Choudhary V."/>
            <person name="Christoffels A."/>
            <person name="Clutterbuck D.R."/>
            <person name="Crowe M.L."/>
            <person name="Dalla E."/>
            <person name="Dalrymple B.P."/>
            <person name="de Bono B."/>
            <person name="Della Gatta G."/>
            <person name="di Bernardo D."/>
            <person name="Down T."/>
            <person name="Engstrom P."/>
            <person name="Fagiolini M."/>
            <person name="Faulkner G."/>
            <person name="Fletcher C.F."/>
            <person name="Fukushima T."/>
            <person name="Furuno M."/>
            <person name="Futaki S."/>
            <person name="Gariboldi M."/>
            <person name="Georgii-Hemming P."/>
            <person name="Gingeras T.R."/>
            <person name="Gojobori T."/>
            <person name="Green R.E."/>
            <person name="Gustincich S."/>
            <person name="Harbers M."/>
            <person name="Hayashi Y."/>
            <person name="Hensch T.K."/>
            <person name="Hirokawa N."/>
            <person name="Hill D."/>
            <person name="Huminiecki L."/>
            <person name="Iacono M."/>
            <person name="Ikeo K."/>
            <person name="Iwama A."/>
            <person name="Ishikawa T."/>
            <person name="Jakt M."/>
            <person name="Kanapin A."/>
            <person name="Katoh M."/>
            <person name="Kawasawa Y."/>
            <person name="Kelso J."/>
            <person name="Kitamura H."/>
            <person name="Kitano H."/>
            <person name="Kollias G."/>
            <person name="Krishnan S.P."/>
            <person name="Kruger A."/>
            <person name="Kummerfeld S.K."/>
            <person name="Kurochkin I.V."/>
            <person name="Lareau L.F."/>
            <person name="Lazarevic D."/>
            <person name="Lipovich L."/>
            <person name="Liu J."/>
            <person name="Liuni S."/>
            <person name="McWilliam S."/>
            <person name="Madan Babu M."/>
            <person name="Madera M."/>
            <person name="Marchionni L."/>
            <person name="Matsuda H."/>
            <person name="Matsuzawa S."/>
            <person name="Miki H."/>
            <person name="Mignone F."/>
            <person name="Miyake S."/>
            <person name="Morris K."/>
            <person name="Mottagui-Tabar S."/>
            <person name="Mulder N."/>
            <person name="Nakano N."/>
            <person name="Nakauchi H."/>
            <person name="Ng P."/>
            <person name="Nilsson R."/>
            <person name="Nishiguchi S."/>
            <person name="Nishikawa S."/>
            <person name="Nori F."/>
            <person name="Ohara O."/>
            <person name="Okazaki Y."/>
            <person name="Orlando V."/>
            <person name="Pang K.C."/>
            <person name="Pavan W.J."/>
            <person name="Pavesi G."/>
            <person name="Pesole G."/>
            <person name="Petrovsky N."/>
            <person name="Piazza S."/>
            <person name="Reed J."/>
            <person name="Reid J.F."/>
            <person name="Ring B.Z."/>
            <person name="Ringwald M."/>
            <person name="Rost B."/>
            <person name="Ruan Y."/>
            <person name="Salzberg S.L."/>
            <person name="Sandelin A."/>
            <person name="Schneider C."/>
            <person name="Schoenbach C."/>
            <person name="Sekiguchi K."/>
            <person name="Semple C.A."/>
            <person name="Seno S."/>
            <person name="Sessa L."/>
            <person name="Sheng Y."/>
            <person name="Shibata Y."/>
            <person name="Shimada H."/>
            <person name="Shimada K."/>
            <person name="Silva D."/>
            <person name="Sinclair B."/>
            <person name="Sperling S."/>
            <person name="Stupka E."/>
            <person name="Sugiura K."/>
            <person name="Sultana R."/>
            <person name="Takenaka Y."/>
            <person name="Taki K."/>
            <person name="Tammoja K."/>
            <person name="Tan S.L."/>
            <person name="Tang S."/>
            <person name="Taylor M.S."/>
            <person name="Tegner J."/>
            <person name="Teichmann S.A."/>
            <person name="Ueda H.R."/>
            <person name="van Nimwegen E."/>
            <person name="Verardo R."/>
            <person name="Wei C.L."/>
            <person name="Yagi K."/>
            <person name="Yamanishi H."/>
            <person name="Zabarovsky E."/>
            <person name="Zhu S."/>
            <person name="Zimmer A."/>
            <person name="Hide W."/>
            <person name="Bult C."/>
            <person name="Grimmond S.M."/>
            <person name="Teasdale R.D."/>
            <person name="Liu E.T."/>
            <person name="Brusic V."/>
            <person name="Quackenbush J."/>
            <person name="Wahlestedt C."/>
            <person name="Mattick J.S."/>
            <person name="Hume D.A."/>
            <person name="Kai C."/>
            <person name="Sasaki D."/>
            <person name="Tomaru Y."/>
            <person name="Fukuda S."/>
            <person name="Kanamori-Katayama M."/>
            <person name="Suzuki M."/>
            <person name="Aoki J."/>
            <person name="Arakawa T."/>
            <person name="Iida J."/>
            <person name="Imamura K."/>
            <person name="Itoh M."/>
            <person name="Kato T."/>
            <person name="Kawaji H."/>
            <person name="Kawagashira N."/>
            <person name="Kawashima T."/>
            <person name="Kojima M."/>
            <person name="Kondo S."/>
            <person name="Konno H."/>
            <person name="Nakano K."/>
            <person name="Ninomiya N."/>
            <person name="Nishio T."/>
            <person name="Okada M."/>
            <person name="Plessy C."/>
            <person name="Shibata K."/>
            <person name="Shiraki T."/>
            <person name="Suzuki S."/>
            <person name="Tagami M."/>
            <person name="Waki K."/>
            <person name="Watahiki A."/>
            <person name="Okamura-Oho Y."/>
            <person name="Suzuki H."/>
            <person name="Kawai J."/>
            <person name="Hayashizaki Y."/>
        </authorList>
    </citation>
    <scope>NUCLEOTIDE SEQUENCE [LARGE SCALE MRNA]</scope>
    <source>
        <strain>C57BL/6J</strain>
        <tissue>Olfactory bulb</tissue>
        <tissue>Testis</tissue>
    </source>
</reference>
<reference key="2">
    <citation type="journal article" date="2004" name="Genome Res.">
        <title>The status, quality, and expansion of the NIH full-length cDNA project: the Mammalian Gene Collection (MGC).</title>
        <authorList>
            <consortium name="The MGC Project Team"/>
        </authorList>
    </citation>
    <scope>NUCLEOTIDE SEQUENCE [LARGE SCALE MRNA]</scope>
    <source>
        <strain>FVB/N</strain>
        <tissue>Mammary tumor</tissue>
    </source>
</reference>
<reference key="3">
    <citation type="journal article" date="2010" name="Cell">
        <title>A tissue-specific atlas of mouse protein phosphorylation and expression.</title>
        <authorList>
            <person name="Huttlin E.L."/>
            <person name="Jedrychowski M.P."/>
            <person name="Elias J.E."/>
            <person name="Goswami T."/>
            <person name="Rad R."/>
            <person name="Beausoleil S.A."/>
            <person name="Villen J."/>
            <person name="Haas W."/>
            <person name="Sowa M.E."/>
            <person name="Gygi S.P."/>
        </authorList>
    </citation>
    <scope>PHOSPHORYLATION [LARGE SCALE ANALYSIS] AT SER-47</scope>
    <scope>IDENTIFICATION BY MASS SPECTROMETRY [LARGE SCALE ANALYSIS]</scope>
    <source>
        <tissue>Testis</tissue>
    </source>
</reference>